<organism>
    <name type="scientific">Mycolicibacterium smegmatis (strain ATCC 700084 / mc(2)155)</name>
    <name type="common">Mycobacterium smegmatis</name>
    <dbReference type="NCBI Taxonomy" id="246196"/>
    <lineage>
        <taxon>Bacteria</taxon>
        <taxon>Bacillati</taxon>
        <taxon>Actinomycetota</taxon>
        <taxon>Actinomycetes</taxon>
        <taxon>Mycobacteriales</taxon>
        <taxon>Mycobacteriaceae</taxon>
        <taxon>Mycolicibacterium</taxon>
    </lineage>
</organism>
<comment type="catalytic activity">
    <reaction evidence="1">
        <text>(S)-4-hydroxy-2-oxopentanoate = acetaldehyde + pyruvate</text>
        <dbReference type="Rhea" id="RHEA:22624"/>
        <dbReference type="ChEBI" id="CHEBI:15343"/>
        <dbReference type="ChEBI" id="CHEBI:15361"/>
        <dbReference type="ChEBI" id="CHEBI:73143"/>
        <dbReference type="EC" id="4.1.3.39"/>
    </reaction>
</comment>
<comment type="similarity">
    <text evidence="1">Belongs to the 4-hydroxy-2-oxovalerate aldolase family.</text>
</comment>
<reference key="1">
    <citation type="submission" date="2006-10" db="EMBL/GenBank/DDBJ databases">
        <authorList>
            <person name="Fleischmann R.D."/>
            <person name="Dodson R.J."/>
            <person name="Haft D.H."/>
            <person name="Merkel J.S."/>
            <person name="Nelson W.C."/>
            <person name="Fraser C.M."/>
        </authorList>
    </citation>
    <scope>NUCLEOTIDE SEQUENCE [LARGE SCALE GENOMIC DNA]</scope>
    <source>
        <strain>ATCC 700084 / mc(2)155</strain>
    </source>
</reference>
<reference key="2">
    <citation type="journal article" date="2007" name="Genome Biol.">
        <title>Interrupted coding sequences in Mycobacterium smegmatis: authentic mutations or sequencing errors?</title>
        <authorList>
            <person name="Deshayes C."/>
            <person name="Perrodou E."/>
            <person name="Gallien S."/>
            <person name="Euphrasie D."/>
            <person name="Schaeffer C."/>
            <person name="Van-Dorsselaer A."/>
            <person name="Poch O."/>
            <person name="Lecompte O."/>
            <person name="Reyrat J.-M."/>
        </authorList>
    </citation>
    <scope>NUCLEOTIDE SEQUENCE [LARGE SCALE GENOMIC DNA]</scope>
    <source>
        <strain>ATCC 700084 / mc(2)155</strain>
    </source>
</reference>
<reference key="3">
    <citation type="journal article" date="2009" name="Genome Res.">
        <title>Ortho-proteogenomics: multiple proteomes investigation through orthology and a new MS-based protocol.</title>
        <authorList>
            <person name="Gallien S."/>
            <person name="Perrodou E."/>
            <person name="Carapito C."/>
            <person name="Deshayes C."/>
            <person name="Reyrat J.-M."/>
            <person name="Van Dorsselaer A."/>
            <person name="Poch O."/>
            <person name="Schaeffer C."/>
            <person name="Lecompte O."/>
        </authorList>
    </citation>
    <scope>NUCLEOTIDE SEQUENCE [LARGE SCALE GENOMIC DNA]</scope>
    <source>
        <strain>ATCC 700084 / mc(2)155</strain>
    </source>
</reference>
<proteinExistence type="inferred from homology"/>
<gene>
    <name type="primary">bphI-2</name>
    <name type="ordered locus">MSMEG_5937</name>
    <name type="ordered locus">MSMEI_5778</name>
</gene>
<name>HOA2_MYCS2</name>
<evidence type="ECO:0000255" key="1">
    <source>
        <dbReference type="HAMAP-Rule" id="MF_01656"/>
    </source>
</evidence>
<accession>A0R4S6</accession>
<accession>I7GF57</accession>
<sequence>MSDIFFNPIWDVRMTDTSLRDGSHHKRHQFTGEEVRSIVAALDAAGVPVIEVTHGDGLGGSSFNYGFSKTPEQELIKIAAETAKESKIAFLMLPGVGTKEDIKEAQNNGGSICRIATHCTEADVSIQHFGLARELGLETVGFLMMAHTISPEKLAQQARIMADAGCQCVYVVDSAGALVLEGVRDRVQALVAELGSDAQVGFHGHENLGLGVANSVEAVRAGAKQIDGSCRRFGAGAGNAPVEALIGVFDKIGVKTGIDFFDIADAAEEVVAPAMPAECLLDRNALIMGYSGVYSSFLKHAIRQSERYGVPAHQLLHRAGQRKLIGGQEDQLIDIALEIKREQEAAASK</sequence>
<dbReference type="EC" id="4.1.3.39" evidence="1"/>
<dbReference type="EMBL" id="CP000480">
    <property type="protein sequence ID" value="ABK72050.1"/>
    <property type="molecule type" value="Genomic_DNA"/>
</dbReference>
<dbReference type="EMBL" id="CP001663">
    <property type="protein sequence ID" value="AFP42211.1"/>
    <property type="molecule type" value="Genomic_DNA"/>
</dbReference>
<dbReference type="RefSeq" id="YP_890164.1">
    <property type="nucleotide sequence ID" value="NC_008596.1"/>
</dbReference>
<dbReference type="SMR" id="A0R4S6"/>
<dbReference type="STRING" id="246196.MSMEG_5937"/>
<dbReference type="PaxDb" id="246196-MSMEI_5778"/>
<dbReference type="KEGG" id="msb:LJ00_29360"/>
<dbReference type="KEGG" id="msg:MSMEI_5778"/>
<dbReference type="KEGG" id="msm:MSMEG_5937"/>
<dbReference type="PATRIC" id="fig|246196.19.peg.5777"/>
<dbReference type="eggNOG" id="COG0119">
    <property type="taxonomic scope" value="Bacteria"/>
</dbReference>
<dbReference type="OrthoDB" id="9803573at2"/>
<dbReference type="Proteomes" id="UP000000757">
    <property type="component" value="Chromosome"/>
</dbReference>
<dbReference type="Proteomes" id="UP000006158">
    <property type="component" value="Chromosome"/>
</dbReference>
<dbReference type="GO" id="GO:0003852">
    <property type="term" value="F:2-isopropylmalate synthase activity"/>
    <property type="evidence" value="ECO:0007669"/>
    <property type="project" value="TreeGrafter"/>
</dbReference>
<dbReference type="GO" id="GO:0008701">
    <property type="term" value="F:4-hydroxy-2-oxovalerate aldolase activity"/>
    <property type="evidence" value="ECO:0007669"/>
    <property type="project" value="UniProtKB-UniRule"/>
</dbReference>
<dbReference type="GO" id="GO:0030145">
    <property type="term" value="F:manganese ion binding"/>
    <property type="evidence" value="ECO:0007669"/>
    <property type="project" value="UniProtKB-UniRule"/>
</dbReference>
<dbReference type="GO" id="GO:0009056">
    <property type="term" value="P:catabolic process"/>
    <property type="evidence" value="ECO:0007669"/>
    <property type="project" value="UniProtKB-KW"/>
</dbReference>
<dbReference type="GO" id="GO:0009098">
    <property type="term" value="P:L-leucine biosynthetic process"/>
    <property type="evidence" value="ECO:0007669"/>
    <property type="project" value="TreeGrafter"/>
</dbReference>
<dbReference type="CDD" id="cd07943">
    <property type="entry name" value="DRE_TIM_HOA"/>
    <property type="match status" value="1"/>
</dbReference>
<dbReference type="FunFam" id="3.20.20.70:FF:000072">
    <property type="entry name" value="4-hydroxy-2-oxovalerate aldolase"/>
    <property type="match status" value="1"/>
</dbReference>
<dbReference type="Gene3D" id="1.10.8.60">
    <property type="match status" value="1"/>
</dbReference>
<dbReference type="Gene3D" id="3.20.20.70">
    <property type="entry name" value="Aldolase class I"/>
    <property type="match status" value="1"/>
</dbReference>
<dbReference type="HAMAP" id="MF_01656">
    <property type="entry name" value="HOA"/>
    <property type="match status" value="1"/>
</dbReference>
<dbReference type="InterPro" id="IPR050073">
    <property type="entry name" value="2-IPM_HCS-like"/>
</dbReference>
<dbReference type="InterPro" id="IPR017629">
    <property type="entry name" value="4OH_2_O-val_aldolase"/>
</dbReference>
<dbReference type="InterPro" id="IPR013785">
    <property type="entry name" value="Aldolase_TIM"/>
</dbReference>
<dbReference type="InterPro" id="IPR012425">
    <property type="entry name" value="DmpG_comm"/>
</dbReference>
<dbReference type="InterPro" id="IPR035685">
    <property type="entry name" value="DRE_TIM_HOA"/>
</dbReference>
<dbReference type="InterPro" id="IPR000891">
    <property type="entry name" value="PYR_CT"/>
</dbReference>
<dbReference type="NCBIfam" id="TIGR03217">
    <property type="entry name" value="4OH_2_O_val_ald"/>
    <property type="match status" value="1"/>
</dbReference>
<dbReference type="NCBIfam" id="NF006049">
    <property type="entry name" value="PRK08195.1"/>
    <property type="match status" value="1"/>
</dbReference>
<dbReference type="PANTHER" id="PTHR10277:SF9">
    <property type="entry name" value="2-ISOPROPYLMALATE SYNTHASE 1, CHLOROPLASTIC-RELATED"/>
    <property type="match status" value="1"/>
</dbReference>
<dbReference type="PANTHER" id="PTHR10277">
    <property type="entry name" value="HOMOCITRATE SYNTHASE-RELATED"/>
    <property type="match status" value="1"/>
</dbReference>
<dbReference type="Pfam" id="PF07836">
    <property type="entry name" value="DmpG_comm"/>
    <property type="match status" value="1"/>
</dbReference>
<dbReference type="Pfam" id="PF00682">
    <property type="entry name" value="HMGL-like"/>
    <property type="match status" value="1"/>
</dbReference>
<dbReference type="SUPFAM" id="SSF51569">
    <property type="entry name" value="Aldolase"/>
    <property type="match status" value="1"/>
</dbReference>
<dbReference type="SUPFAM" id="SSF89000">
    <property type="entry name" value="post-HMGL domain-like"/>
    <property type="match status" value="1"/>
</dbReference>
<dbReference type="PROSITE" id="PS50991">
    <property type="entry name" value="PYR_CT"/>
    <property type="match status" value="1"/>
</dbReference>
<protein>
    <recommendedName>
        <fullName evidence="1">4-hydroxy-2-oxovalerate aldolase 2</fullName>
        <shortName evidence="1">HOA 2</shortName>
        <ecNumber evidence="1">4.1.3.39</ecNumber>
    </recommendedName>
    <alternativeName>
        <fullName evidence="1">4-hydroxy-2-keto-pentanoic acid aldolase 2</fullName>
    </alternativeName>
    <alternativeName>
        <fullName evidence="1">4-hydroxy-2-oxopentanoate aldolase 2</fullName>
    </alternativeName>
</protein>
<keyword id="KW-0058">Aromatic hydrocarbons catabolism</keyword>
<keyword id="KW-0456">Lyase</keyword>
<keyword id="KW-0464">Manganese</keyword>
<keyword id="KW-0479">Metal-binding</keyword>
<keyword id="KW-1185">Reference proteome</keyword>
<feature type="chain" id="PRO_0000387855" description="4-hydroxy-2-oxovalerate aldolase 2">
    <location>
        <begin position="1"/>
        <end position="349"/>
    </location>
</feature>
<feature type="domain" description="Pyruvate carboxyltransferase" evidence="1">
    <location>
        <begin position="12"/>
        <end position="264"/>
    </location>
</feature>
<feature type="active site" description="Proton acceptor" evidence="1">
    <location>
        <position position="24"/>
    </location>
</feature>
<feature type="binding site" evidence="1">
    <location>
        <begin position="20"/>
        <end position="21"/>
    </location>
    <ligand>
        <name>substrate</name>
    </ligand>
</feature>
<feature type="binding site" evidence="1">
    <location>
        <position position="21"/>
    </location>
    <ligand>
        <name>Mn(2+)</name>
        <dbReference type="ChEBI" id="CHEBI:29035"/>
    </ligand>
</feature>
<feature type="binding site" evidence="1">
    <location>
        <position position="174"/>
    </location>
    <ligand>
        <name>substrate</name>
    </ligand>
</feature>
<feature type="binding site" evidence="1">
    <location>
        <position position="203"/>
    </location>
    <ligand>
        <name>Mn(2+)</name>
        <dbReference type="ChEBI" id="CHEBI:29035"/>
    </ligand>
</feature>
<feature type="binding site" evidence="1">
    <location>
        <position position="203"/>
    </location>
    <ligand>
        <name>substrate</name>
    </ligand>
</feature>
<feature type="binding site" evidence="1">
    <location>
        <position position="205"/>
    </location>
    <ligand>
        <name>Mn(2+)</name>
        <dbReference type="ChEBI" id="CHEBI:29035"/>
    </ligand>
</feature>
<feature type="binding site" evidence="1">
    <location>
        <position position="294"/>
    </location>
    <ligand>
        <name>substrate</name>
    </ligand>
</feature>
<feature type="site" description="Transition state stabilizer" evidence="1">
    <location>
        <position position="20"/>
    </location>
</feature>